<accession>Q3C1F3</accession>
<name>GLB12_LOTJA</name>
<proteinExistence type="evidence at transcript level"/>
<reference key="1">
    <citation type="journal article" date="2005" name="Plant Cell Physiol.">
        <title>Symbiotic rhizobium and nitric oxide induce gene expression of non-symbiotic hemoglobin in Lotus japonicus.</title>
        <authorList>
            <person name="Shimoda Y."/>
            <person name="Nagata M."/>
            <person name="Suzuki A."/>
            <person name="Abe M."/>
            <person name="Sato S."/>
            <person name="Kato T."/>
            <person name="Tabata S."/>
            <person name="Higashi S."/>
            <person name="Uchiumi T."/>
        </authorList>
    </citation>
    <scope>NUCLEOTIDE SEQUENCE [MRNA]</scope>
    <scope>INDUCTION BY SUCROSE</scope>
    <scope>TISSUE SPECIFICITY</scope>
    <source>
        <strain>cv. Miyakojima MG-20</strain>
        <tissue>Seedling</tissue>
    </source>
</reference>
<reference key="2">
    <citation type="submission" date="2012-05" db="EMBL/GenBank/DDBJ databases">
        <authorList>
            <person name="Krishnakumar V."/>
            <person name="Cheung F."/>
            <person name="Xiao Y."/>
            <person name="Chan A."/>
            <person name="Moskal W.A."/>
            <person name="Town C.D."/>
        </authorList>
    </citation>
    <scope>NUCLEOTIDE SEQUENCE [MRNA]</scope>
</reference>
<reference key="3">
    <citation type="journal article" date="2011" name="New Phytol.">
        <title>Regulation of nonsymbiotic and truncated hemoglobin genes of Lotus japonicus in plant organs and in response to nitric oxide and hormones.</title>
        <authorList>
            <person name="Bustos-Sanmamed P."/>
            <person name="Tovar-Mendez A."/>
            <person name="Crespi M."/>
            <person name="Sato S."/>
            <person name="Tabata S."/>
            <person name="Becana M."/>
        </authorList>
    </citation>
    <scope>TISSUE SPECIFICITY</scope>
    <scope>DEVELOPMENTAL STAGE</scope>
    <scope>INDUCTION BY ABSCISIC ACID AND SUCROSE</scope>
    <source>
        <strain>cv. MG20</strain>
    </source>
</reference>
<reference key="4">
    <citation type="journal article" date="2021" name="J. Exp. Bot.">
        <title>Three classes of hemoglobins are required for optimal vegetative and reproductive growth of Lotus japonicus: genetic and biochemical characterization of LjGlb2-1.</title>
        <authorList>
            <person name="Villar I."/>
            <person name="Rubio M.C."/>
            <person name="Calvo-Begueria L."/>
            <person name="Perez-Rontome C."/>
            <person name="Larrainzar E."/>
            <person name="Wilson M.T."/>
            <person name="Sandal N."/>
            <person name="Mur L.A."/>
            <person name="Wang L."/>
            <person name="Reeder B."/>
            <person name="Duanmu D."/>
            <person name="Uchiumi T."/>
            <person name="Stougaard J."/>
            <person name="Becana M."/>
        </authorList>
    </citation>
    <scope>FUNCTION</scope>
    <scope>DISRUPTION PHENOTYPE</scope>
    <source>
        <strain>cv. Gifu B-129</strain>
    </source>
</reference>
<keyword id="KW-0349">Heme</keyword>
<keyword id="KW-0408">Iron</keyword>
<keyword id="KW-0479">Metal-binding</keyword>
<keyword id="KW-0560">Oxidoreductase</keyword>
<keyword id="KW-0561">Oxygen transport</keyword>
<keyword id="KW-0813">Transport</keyword>
<comment type="function">
    <text evidence="1 2 4 5 9">Phytoglobin that reduces nitrite to nitric oxide (NO) under anoxic conditions (e.g. during flooding or in waterlogged soil) and upon root nodulation (By similarity). Required for general plant development and during nodulation, especially for the onset of symbiosis (By similarity). Monitors nitric oxide (NO) levels during early phase of the nitrogen-fixing symbiosis and buffers oxygen in functioning nodules (By similarity). Necessary for the production of pods (PubMed:34387337). May not function as an oxygen storage or transport protein (By similarity). Has an unusually high affinity for O(2) through a hexacoordinate heme iron because of a very low dissociation constant (By similarity).</text>
</comment>
<comment type="catalytic activity">
    <reaction evidence="2">
        <text>Fe(III)-heme b-[protein] + nitric oxide + H2O = Fe(II)-heme b-[protein] + nitrite + 2 H(+)</text>
        <dbReference type="Rhea" id="RHEA:77711"/>
        <dbReference type="Rhea" id="RHEA-COMP:18975"/>
        <dbReference type="Rhea" id="RHEA-COMP:18976"/>
        <dbReference type="ChEBI" id="CHEBI:15377"/>
        <dbReference type="ChEBI" id="CHEBI:15378"/>
        <dbReference type="ChEBI" id="CHEBI:16301"/>
        <dbReference type="ChEBI" id="CHEBI:16480"/>
        <dbReference type="ChEBI" id="CHEBI:55376"/>
        <dbReference type="ChEBI" id="CHEBI:60344"/>
    </reaction>
    <physiologicalReaction direction="right-to-left" evidence="2">
        <dbReference type="Rhea" id="RHEA:77713"/>
    </physiologicalReaction>
</comment>
<comment type="cofactor">
    <cofactor evidence="3">
        <name>heme b</name>
        <dbReference type="ChEBI" id="CHEBI:60344"/>
    </cofactor>
    <text evidence="3">Binds 1 heme group per subunit.</text>
</comment>
<comment type="subunit">
    <text evidence="2">Homodimer.</text>
</comment>
<comment type="tissue specificity">
    <text evidence="7 8">Mainly expressed in root nodules and leaves, and, to a lower extent, in roots, stems, flowers and fruits (PubMed:15668209, PubMed:21073469). Accumulates in mature root nodules (PubMed:15668209).</text>
</comment>
<comment type="developmental stage">
    <text evidence="8">In nodules, mainly localized in the vascular bundles and infected tissues, and, to a lower extent, in the cortex.</text>
</comment>
<comment type="induction">
    <text evidence="7 8">Induced by abscisic acid (ABA) but repressed by ethylene and cytokinins (CK, an equimolar mixture of kinetin and 6-benzyl-aminopurine) in roots (PubMed:21073469). Slightly induced by sucrose in seedlings roots (PubMed:15668209, PubMed:21073469).</text>
</comment>
<comment type="disruption phenotype">
    <text evidence="9">Normal vegetative growth but slightly delayed flowering and reduced pods number.</text>
</comment>
<comment type="similarity">
    <text evidence="13">Belongs to the plant globin family.</text>
</comment>
<protein>
    <recommendedName>
        <fullName evidence="2">Anaerobic nitrite reductase Glb1-2</fullName>
        <ecNumber evidence="2">1.7.2.-</ecNumber>
    </recommendedName>
    <alternativeName>
        <fullName evidence="11 12">Nonsymbiotic hemoglobin 1-2</fullName>
        <shortName evidence="11 12">LjGlb1-2</shortName>
    </alternativeName>
    <alternativeName>
        <fullName evidence="10">Nonsymbiotic hemoglobin 2</fullName>
        <shortName evidence="10">LjHb2</shortName>
    </alternativeName>
    <alternativeName>
        <fullName evidence="13">Phytoglobin 1.2</fullName>
        <shortName evidence="13">Phytogb1.2</shortName>
    </alternativeName>
</protein>
<organism>
    <name type="scientific">Lotus japonicus</name>
    <name type="common">Lotus corniculatus var. japonicus</name>
    <dbReference type="NCBI Taxonomy" id="34305"/>
    <lineage>
        <taxon>Eukaryota</taxon>
        <taxon>Viridiplantae</taxon>
        <taxon>Streptophyta</taxon>
        <taxon>Embryophyta</taxon>
        <taxon>Tracheophyta</taxon>
        <taxon>Spermatophyta</taxon>
        <taxon>Magnoliopsida</taxon>
        <taxon>eudicotyledons</taxon>
        <taxon>Gunneridae</taxon>
        <taxon>Pentapetalae</taxon>
        <taxon>rosids</taxon>
        <taxon>fabids</taxon>
        <taxon>Fabales</taxon>
        <taxon>Fabaceae</taxon>
        <taxon>Papilionoideae</taxon>
        <taxon>50 kb inversion clade</taxon>
        <taxon>NPAAA clade</taxon>
        <taxon>Hologalegina</taxon>
        <taxon>robinioid clade</taxon>
        <taxon>Loteae</taxon>
        <taxon>Lotus</taxon>
    </lineage>
</organism>
<dbReference type="EC" id="1.7.2.-" evidence="2"/>
<dbReference type="EMBL" id="AB238221">
    <property type="protein sequence ID" value="BAE46740.1"/>
    <property type="molecule type" value="mRNA"/>
</dbReference>
<dbReference type="EMBL" id="BT134625">
    <property type="protein sequence ID" value="AFK34420.1"/>
    <property type="molecule type" value="mRNA"/>
</dbReference>
<dbReference type="EMBL" id="BT148125">
    <property type="protein sequence ID" value="AFK47919.1"/>
    <property type="molecule type" value="mRNA"/>
</dbReference>
<dbReference type="SMR" id="Q3C1F3"/>
<dbReference type="OMA" id="GLLIFHR"/>
<dbReference type="OrthoDB" id="436496at2759"/>
<dbReference type="GO" id="GO:0020037">
    <property type="term" value="F:heme binding"/>
    <property type="evidence" value="ECO:0007669"/>
    <property type="project" value="InterPro"/>
</dbReference>
<dbReference type="GO" id="GO:0046872">
    <property type="term" value="F:metal ion binding"/>
    <property type="evidence" value="ECO:0007669"/>
    <property type="project" value="UniProtKB-KW"/>
</dbReference>
<dbReference type="GO" id="GO:0016491">
    <property type="term" value="F:oxidoreductase activity"/>
    <property type="evidence" value="ECO:0007669"/>
    <property type="project" value="UniProtKB-KW"/>
</dbReference>
<dbReference type="GO" id="GO:0019825">
    <property type="term" value="F:oxygen binding"/>
    <property type="evidence" value="ECO:0007669"/>
    <property type="project" value="InterPro"/>
</dbReference>
<dbReference type="GO" id="GO:0005344">
    <property type="term" value="F:oxygen carrier activity"/>
    <property type="evidence" value="ECO:0007669"/>
    <property type="project" value="UniProtKB-KW"/>
</dbReference>
<dbReference type="GO" id="GO:0009737">
    <property type="term" value="P:response to abscisic acid"/>
    <property type="evidence" value="ECO:0000270"/>
    <property type="project" value="UniProtKB"/>
</dbReference>
<dbReference type="GO" id="GO:0009744">
    <property type="term" value="P:response to sucrose"/>
    <property type="evidence" value="ECO:0000270"/>
    <property type="project" value="UniProtKB"/>
</dbReference>
<dbReference type="Gene3D" id="1.10.490.10">
    <property type="entry name" value="Globins"/>
    <property type="match status" value="1"/>
</dbReference>
<dbReference type="InterPro" id="IPR000971">
    <property type="entry name" value="Globin"/>
</dbReference>
<dbReference type="InterPro" id="IPR009050">
    <property type="entry name" value="Globin-like_sf"/>
</dbReference>
<dbReference type="InterPro" id="IPR012292">
    <property type="entry name" value="Globin/Proto"/>
</dbReference>
<dbReference type="InterPro" id="IPR001032">
    <property type="entry name" value="Leghaemoglobin-like"/>
</dbReference>
<dbReference type="InterPro" id="IPR019824">
    <property type="entry name" value="Leghaemoglobin_Fe_BS"/>
</dbReference>
<dbReference type="PANTHER" id="PTHR22924">
    <property type="entry name" value="LEGHEMOGLOBIN-RELATED"/>
    <property type="match status" value="1"/>
</dbReference>
<dbReference type="PANTHER" id="PTHR22924:SF89">
    <property type="entry name" value="NON-SYMBIOTIC HEMOGLOBIN"/>
    <property type="match status" value="1"/>
</dbReference>
<dbReference type="Pfam" id="PF00042">
    <property type="entry name" value="Globin"/>
    <property type="match status" value="1"/>
</dbReference>
<dbReference type="PRINTS" id="PR00188">
    <property type="entry name" value="PLANTGLOBIN"/>
</dbReference>
<dbReference type="SUPFAM" id="SSF46458">
    <property type="entry name" value="Globin-like"/>
    <property type="match status" value="1"/>
</dbReference>
<dbReference type="PROSITE" id="PS01033">
    <property type="entry name" value="GLOBIN"/>
    <property type="match status" value="1"/>
</dbReference>
<dbReference type="PROSITE" id="PS00208">
    <property type="entry name" value="PLANT_GLOBIN"/>
    <property type="match status" value="1"/>
</dbReference>
<sequence length="161" mass="18070">MAENTTTIAFTEEQEALVVKSWNAMKKDSAELSFKFFSKILEIAPPAKQLFSFLRDSEVPLDQNPKLKPHAMSVFLMTCESAAQLRKEGKVTVRESNLKKLGATHFKKGVIPEHFEVTKQALLDTIKEAVPELWSLELKDAWAIAHDQLASAIIAEMKPES</sequence>
<evidence type="ECO:0000250" key="1">
    <source>
        <dbReference type="UniProtKB" id="I3SPW2"/>
    </source>
</evidence>
<evidence type="ECO:0000250" key="2">
    <source>
        <dbReference type="UniProtKB" id="O04986"/>
    </source>
</evidence>
<evidence type="ECO:0000250" key="3">
    <source>
        <dbReference type="UniProtKB" id="P68168"/>
    </source>
</evidence>
<evidence type="ECO:0000250" key="4">
    <source>
        <dbReference type="UniProtKB" id="Q3C1F4"/>
    </source>
</evidence>
<evidence type="ECO:0000250" key="5">
    <source>
        <dbReference type="UniProtKB" id="Q42831"/>
    </source>
</evidence>
<evidence type="ECO:0000255" key="6">
    <source>
        <dbReference type="PROSITE-ProRule" id="PRU00238"/>
    </source>
</evidence>
<evidence type="ECO:0000269" key="7">
    <source>
    </source>
</evidence>
<evidence type="ECO:0000269" key="8">
    <source>
    </source>
</evidence>
<evidence type="ECO:0000269" key="9">
    <source>
    </source>
</evidence>
<evidence type="ECO:0000303" key="10">
    <source>
    </source>
</evidence>
<evidence type="ECO:0000303" key="11">
    <source>
    </source>
</evidence>
<evidence type="ECO:0000303" key="12">
    <source>
    </source>
</evidence>
<evidence type="ECO:0000305" key="13"/>
<evidence type="ECO:0000305" key="14">
    <source>
    </source>
</evidence>
<feature type="chain" id="PRO_0000460313" description="Anaerobic nitrite reductase Glb1-2">
    <location>
        <begin position="1"/>
        <end position="161"/>
    </location>
</feature>
<feature type="domain" description="Globin" evidence="6">
    <location>
        <begin position="9"/>
        <end position="158"/>
    </location>
</feature>
<feature type="short sequence motif" description="Homodimerization" evidence="2">
    <location>
        <begin position="42"/>
        <end position="46"/>
    </location>
</feature>
<feature type="short sequence motif" description="Homodimerization" evidence="2">
    <location>
        <begin position="112"/>
        <end position="124"/>
    </location>
</feature>
<feature type="binding site" evidence="3">
    <location>
        <position position="52"/>
    </location>
    <ligand>
        <name>heme b</name>
        <dbReference type="ChEBI" id="CHEBI:60344"/>
    </ligand>
</feature>
<feature type="binding site" evidence="2">
    <location>
        <position position="66"/>
    </location>
    <ligand>
        <name>heme b</name>
        <dbReference type="ChEBI" id="CHEBI:60344"/>
    </ligand>
</feature>
<feature type="binding site" description="distal binding residue" evidence="6">
    <location>
        <position position="70"/>
    </location>
    <ligand>
        <name>heme b</name>
        <dbReference type="ChEBI" id="CHEBI:60344"/>
    </ligand>
    <ligandPart>
        <name>Fe</name>
        <dbReference type="ChEBI" id="CHEBI:18248"/>
    </ligandPart>
</feature>
<feature type="binding site" evidence="2">
    <location>
        <position position="100"/>
    </location>
    <ligand>
        <name>heme b</name>
        <dbReference type="ChEBI" id="CHEBI:60344"/>
    </ligand>
</feature>
<feature type="binding site" evidence="2">
    <location>
        <position position="104"/>
    </location>
    <ligand>
        <name>heme b</name>
        <dbReference type="ChEBI" id="CHEBI:60344"/>
    </ligand>
</feature>
<feature type="binding site" description="proximal binding residue" evidence="6">
    <location>
        <position position="105"/>
    </location>
    <ligand>
        <name>heme b</name>
        <dbReference type="ChEBI" id="CHEBI:60344"/>
    </ligand>
    <ligandPart>
        <name>Fe</name>
        <dbReference type="ChEBI" id="CHEBI:18248"/>
    </ligandPart>
</feature>
<feature type="site" description="Homodimerization" evidence="2">
    <location>
        <position position="139"/>
    </location>
</feature>
<gene>
    <name evidence="11 12" type="primary">GLB1-2</name>
    <name evidence="10" type="synonym">HB2</name>
    <name evidence="14" type="ordered locus">LotjaGi3g1v0504600</name>
    <name evidence="14" type="ORF">Lj3g3v3338180</name>
</gene>